<name>HTPX_BURMS</name>
<proteinExistence type="inferred from homology"/>
<organism>
    <name type="scientific">Burkholderia mallei (strain SAVP1)</name>
    <dbReference type="NCBI Taxonomy" id="320388"/>
    <lineage>
        <taxon>Bacteria</taxon>
        <taxon>Pseudomonadati</taxon>
        <taxon>Pseudomonadota</taxon>
        <taxon>Betaproteobacteria</taxon>
        <taxon>Burkholderiales</taxon>
        <taxon>Burkholderiaceae</taxon>
        <taxon>Burkholderia</taxon>
        <taxon>pseudomallei group</taxon>
    </lineage>
</organism>
<accession>A1V794</accession>
<protein>
    <recommendedName>
        <fullName evidence="1">Protease HtpX homolog</fullName>
        <ecNumber evidence="1">3.4.24.-</ecNumber>
    </recommendedName>
</protein>
<keyword id="KW-0997">Cell inner membrane</keyword>
<keyword id="KW-1003">Cell membrane</keyword>
<keyword id="KW-0378">Hydrolase</keyword>
<keyword id="KW-0472">Membrane</keyword>
<keyword id="KW-0479">Metal-binding</keyword>
<keyword id="KW-0482">Metalloprotease</keyword>
<keyword id="KW-0645">Protease</keyword>
<keyword id="KW-0812">Transmembrane</keyword>
<keyword id="KW-1133">Transmembrane helix</keyword>
<keyword id="KW-0862">Zinc</keyword>
<feature type="chain" id="PRO_1000077454" description="Protease HtpX homolog">
    <location>
        <begin position="1"/>
        <end position="285"/>
    </location>
</feature>
<feature type="transmembrane region" description="Helical" evidence="1">
    <location>
        <begin position="7"/>
        <end position="27"/>
    </location>
</feature>
<feature type="transmembrane region" description="Helical" evidence="1">
    <location>
        <begin position="30"/>
        <end position="50"/>
    </location>
</feature>
<feature type="transmembrane region" description="Helical" evidence="1">
    <location>
        <begin position="146"/>
        <end position="166"/>
    </location>
</feature>
<feature type="transmembrane region" description="Helical" evidence="1">
    <location>
        <begin position="177"/>
        <end position="197"/>
    </location>
</feature>
<feature type="active site" evidence="1">
    <location>
        <position position="132"/>
    </location>
</feature>
<feature type="binding site" evidence="1">
    <location>
        <position position="131"/>
    </location>
    <ligand>
        <name>Zn(2+)</name>
        <dbReference type="ChEBI" id="CHEBI:29105"/>
        <note>catalytic</note>
    </ligand>
</feature>
<feature type="binding site" evidence="1">
    <location>
        <position position="135"/>
    </location>
    <ligand>
        <name>Zn(2+)</name>
        <dbReference type="ChEBI" id="CHEBI:29105"/>
        <note>catalytic</note>
    </ligand>
</feature>
<feature type="binding site" evidence="1">
    <location>
        <position position="202"/>
    </location>
    <ligand>
        <name>Zn(2+)</name>
        <dbReference type="ChEBI" id="CHEBI:29105"/>
        <note>catalytic</note>
    </ligand>
</feature>
<sequence>MFNWVKTAMLMAAITALFIVIGGMIGGSRGMTIALLIALGMNFFSYWFSDKMVLRMYNAQEVDEATAPQFYRMVRELATRANLPMPRVYLIDENQPNAFATGRNPEHAAVAATTGILRVLSEREMRGVMAHELAHVKHRDILISTISATMAGAISALANFAMFFGGRDENGRPANPIAGIAVALLAPIAGALIQMAISRAREFEADRGGAQISGDPQALASALDKIHRYASGIPFQTAEEHPATAQMMIMNPLSGGGLQNLFSTHPATEERIARLMDMARTGRFD</sequence>
<dbReference type="EC" id="3.4.24.-" evidence="1"/>
<dbReference type="EMBL" id="CP000526">
    <property type="protein sequence ID" value="ABM50663.1"/>
    <property type="molecule type" value="Genomic_DNA"/>
</dbReference>
<dbReference type="RefSeq" id="WP_004189409.1">
    <property type="nucleotide sequence ID" value="NC_008785.1"/>
</dbReference>
<dbReference type="GeneID" id="93058627"/>
<dbReference type="KEGG" id="bmv:BMASAVP1_A2802"/>
<dbReference type="HOGENOM" id="CLU_042266_3_0_4"/>
<dbReference type="GO" id="GO:0005886">
    <property type="term" value="C:plasma membrane"/>
    <property type="evidence" value="ECO:0007669"/>
    <property type="project" value="UniProtKB-SubCell"/>
</dbReference>
<dbReference type="GO" id="GO:0004222">
    <property type="term" value="F:metalloendopeptidase activity"/>
    <property type="evidence" value="ECO:0007669"/>
    <property type="project" value="UniProtKB-UniRule"/>
</dbReference>
<dbReference type="GO" id="GO:0008270">
    <property type="term" value="F:zinc ion binding"/>
    <property type="evidence" value="ECO:0007669"/>
    <property type="project" value="UniProtKB-UniRule"/>
</dbReference>
<dbReference type="GO" id="GO:0006508">
    <property type="term" value="P:proteolysis"/>
    <property type="evidence" value="ECO:0007669"/>
    <property type="project" value="UniProtKB-KW"/>
</dbReference>
<dbReference type="CDD" id="cd07336">
    <property type="entry name" value="M48B_HtpX_like"/>
    <property type="match status" value="1"/>
</dbReference>
<dbReference type="Gene3D" id="3.30.2010.10">
    <property type="entry name" value="Metalloproteases ('zincins'), catalytic domain"/>
    <property type="match status" value="1"/>
</dbReference>
<dbReference type="HAMAP" id="MF_00188">
    <property type="entry name" value="Pept_M48_protease_HtpX"/>
    <property type="match status" value="1"/>
</dbReference>
<dbReference type="InterPro" id="IPR050083">
    <property type="entry name" value="HtpX_protease"/>
</dbReference>
<dbReference type="InterPro" id="IPR022919">
    <property type="entry name" value="Pept_M48_protease_HtpX"/>
</dbReference>
<dbReference type="InterPro" id="IPR001915">
    <property type="entry name" value="Peptidase_M48"/>
</dbReference>
<dbReference type="NCBIfam" id="NF002363">
    <property type="entry name" value="PRK01345.1"/>
    <property type="match status" value="1"/>
</dbReference>
<dbReference type="NCBIfam" id="NF002826">
    <property type="entry name" value="PRK03001.1"/>
    <property type="match status" value="1"/>
</dbReference>
<dbReference type="PANTHER" id="PTHR43221">
    <property type="entry name" value="PROTEASE HTPX"/>
    <property type="match status" value="1"/>
</dbReference>
<dbReference type="PANTHER" id="PTHR43221:SF1">
    <property type="entry name" value="PROTEASE HTPX"/>
    <property type="match status" value="1"/>
</dbReference>
<dbReference type="Pfam" id="PF01435">
    <property type="entry name" value="Peptidase_M48"/>
    <property type="match status" value="1"/>
</dbReference>
<gene>
    <name evidence="1" type="primary">htpX</name>
    <name type="ordered locus">BMASAVP1_A2802</name>
</gene>
<comment type="cofactor">
    <cofactor evidence="1">
        <name>Zn(2+)</name>
        <dbReference type="ChEBI" id="CHEBI:29105"/>
    </cofactor>
    <text evidence="1">Binds 1 zinc ion per subunit.</text>
</comment>
<comment type="subcellular location">
    <subcellularLocation>
        <location evidence="1">Cell inner membrane</location>
        <topology evidence="1">Multi-pass membrane protein</topology>
    </subcellularLocation>
</comment>
<comment type="similarity">
    <text evidence="1">Belongs to the peptidase M48B family.</text>
</comment>
<evidence type="ECO:0000255" key="1">
    <source>
        <dbReference type="HAMAP-Rule" id="MF_00188"/>
    </source>
</evidence>
<reference key="1">
    <citation type="journal article" date="2010" name="Genome Biol. Evol.">
        <title>Continuing evolution of Burkholderia mallei through genome reduction and large-scale rearrangements.</title>
        <authorList>
            <person name="Losada L."/>
            <person name="Ronning C.M."/>
            <person name="DeShazer D."/>
            <person name="Woods D."/>
            <person name="Fedorova N."/>
            <person name="Kim H.S."/>
            <person name="Shabalina S.A."/>
            <person name="Pearson T.R."/>
            <person name="Brinkac L."/>
            <person name="Tan P."/>
            <person name="Nandi T."/>
            <person name="Crabtree J."/>
            <person name="Badger J."/>
            <person name="Beckstrom-Sternberg S."/>
            <person name="Saqib M."/>
            <person name="Schutzer S.E."/>
            <person name="Keim P."/>
            <person name="Nierman W.C."/>
        </authorList>
    </citation>
    <scope>NUCLEOTIDE SEQUENCE [LARGE SCALE GENOMIC DNA]</scope>
    <source>
        <strain>SAVP1</strain>
    </source>
</reference>